<evidence type="ECO:0000250" key="1">
    <source>
        <dbReference type="UniProtKB" id="Q9BY42"/>
    </source>
</evidence>
<evidence type="ECO:0000256" key="2">
    <source>
        <dbReference type="SAM" id="MobiDB-lite"/>
    </source>
</evidence>
<evidence type="ECO:0000305" key="3"/>
<keyword id="KW-0158">Chromosome</keyword>
<keyword id="KW-0597">Phosphoprotein</keyword>
<keyword id="KW-1185">Reference proteome</keyword>
<gene>
    <name type="primary">RTF2</name>
    <name type="synonym">RTFDC1</name>
    <name type="ORF">QccE-12445</name>
</gene>
<proteinExistence type="evidence at transcript level"/>
<feature type="chain" id="PRO_0000327234" description="Replication termination factor 2">
    <location>
        <begin position="1"/>
        <end position="306"/>
    </location>
</feature>
<feature type="region of interest" description="Disordered" evidence="2">
    <location>
        <begin position="193"/>
        <end position="276"/>
    </location>
</feature>
<feature type="compositionally biased region" description="Basic and acidic residues" evidence="2">
    <location>
        <begin position="226"/>
        <end position="240"/>
    </location>
</feature>
<feature type="modified residue" description="Phosphoserine" evidence="1">
    <location>
        <position position="287"/>
    </location>
</feature>
<sequence length="306" mass="33870">MGCDGGTIPKRHELVKGPKKVEKVDKDAELVAQWNYCTLSQEILRRPIVACELGRLYNKDAVIEFLLDKSAEKALGKAASHIKSIKNVTELKLSDNPAWEGDKGNTKGDKHDDLQRARFICPVVGLEMNGRHRFCFLRCCGCVFSERALKEIKAEVCHTCGAAFQEDDVIVLNGTNEDVDVLKARMEERRLRAKLEKKTKKPKAAESVSKPDVSEEAPGPSKVKTGKPEETSLDSREKKNNLAPKSAATNESFSGKAGKPLCGATKRSIADSEESEAYKSLFTTHSSAKRSKEESAHWVTHTSYCF</sequence>
<comment type="function">
    <text evidence="1">Replication termination factor which is a component of the elongating replisome. Required for ATR pathway signaling upon DNA damage and has a positive activity during DNA replication. Might function to facilitate fork pausing at replication fork barriers like the rDNA. May be globally required to stimulate ATR signaling after the fork stalls or encounters a lesion. Interacts with nascent DNA.</text>
</comment>
<comment type="subunit">
    <text evidence="1">Interacts with DDI2; probably also interacts with DDI1.</text>
</comment>
<comment type="subcellular location">
    <subcellularLocation>
        <location evidence="1">Chromosome</location>
    </subcellularLocation>
    <text evidence="1">Localizes at the replication fork.</text>
</comment>
<comment type="PTM">
    <text evidence="1">Undergoes proteasomal degradation, via DDI1 and DDI2. Removal from stalled replisomes and degradation are required for genome stability.</text>
</comment>
<comment type="similarity">
    <text evidence="3">Belongs to the rtf2 family.</text>
</comment>
<reference key="1">
    <citation type="submission" date="2005-06" db="EMBL/GenBank/DDBJ databases">
        <title>DNA sequences of macaque genes expressed in brain or testis and its evolutionary implications.</title>
        <authorList>
            <consortium name="International consortium for macaque cDNA sequencing and analysis"/>
        </authorList>
    </citation>
    <scope>NUCLEOTIDE SEQUENCE [LARGE SCALE MRNA]</scope>
    <source>
        <tissue>Brain cortex</tissue>
    </source>
</reference>
<name>RTF2_MACFA</name>
<organism>
    <name type="scientific">Macaca fascicularis</name>
    <name type="common">Crab-eating macaque</name>
    <name type="synonym">Cynomolgus monkey</name>
    <dbReference type="NCBI Taxonomy" id="9541"/>
    <lineage>
        <taxon>Eukaryota</taxon>
        <taxon>Metazoa</taxon>
        <taxon>Chordata</taxon>
        <taxon>Craniata</taxon>
        <taxon>Vertebrata</taxon>
        <taxon>Euteleostomi</taxon>
        <taxon>Mammalia</taxon>
        <taxon>Eutheria</taxon>
        <taxon>Euarchontoglires</taxon>
        <taxon>Primates</taxon>
        <taxon>Haplorrhini</taxon>
        <taxon>Catarrhini</taxon>
        <taxon>Cercopithecidae</taxon>
        <taxon>Cercopithecinae</taxon>
        <taxon>Macaca</taxon>
    </lineage>
</organism>
<accession>Q4R594</accession>
<dbReference type="EMBL" id="AB169650">
    <property type="protein sequence ID" value="BAE01731.1"/>
    <property type="molecule type" value="mRNA"/>
</dbReference>
<dbReference type="STRING" id="9541.ENSMFAP00000005238"/>
<dbReference type="eggNOG" id="KOG3113">
    <property type="taxonomic scope" value="Eukaryota"/>
</dbReference>
<dbReference type="Proteomes" id="UP000233100">
    <property type="component" value="Unplaced"/>
</dbReference>
<dbReference type="GO" id="GO:0005634">
    <property type="term" value="C:nucleus"/>
    <property type="evidence" value="ECO:0007669"/>
    <property type="project" value="TreeGrafter"/>
</dbReference>
<dbReference type="GO" id="GO:0005657">
    <property type="term" value="C:replication fork"/>
    <property type="evidence" value="ECO:0000250"/>
    <property type="project" value="UniProtKB"/>
</dbReference>
<dbReference type="GO" id="GO:0003677">
    <property type="term" value="F:DNA binding"/>
    <property type="evidence" value="ECO:0000250"/>
    <property type="project" value="UniProtKB"/>
</dbReference>
<dbReference type="GO" id="GO:0072711">
    <property type="term" value="P:cellular response to hydroxyurea"/>
    <property type="evidence" value="ECO:0000250"/>
    <property type="project" value="UniProtKB"/>
</dbReference>
<dbReference type="GO" id="GO:1902979">
    <property type="term" value="P:mitotic DNA replication termination"/>
    <property type="evidence" value="ECO:0007669"/>
    <property type="project" value="InterPro"/>
</dbReference>
<dbReference type="GO" id="GO:0097752">
    <property type="term" value="P:regulation of DNA stability"/>
    <property type="evidence" value="ECO:0000250"/>
    <property type="project" value="UniProtKB"/>
</dbReference>
<dbReference type="CDD" id="cd16653">
    <property type="entry name" value="RING-like_Rtf2"/>
    <property type="match status" value="1"/>
</dbReference>
<dbReference type="InterPro" id="IPR006735">
    <property type="entry name" value="Rtf2"/>
</dbReference>
<dbReference type="InterPro" id="IPR027799">
    <property type="entry name" value="Rtf2_RING-finger"/>
</dbReference>
<dbReference type="PANTHER" id="PTHR12775">
    <property type="entry name" value="PROTEIN C20ORF43 HOMOLOG"/>
    <property type="match status" value="1"/>
</dbReference>
<dbReference type="PANTHER" id="PTHR12775:SF0">
    <property type="entry name" value="REPLICATION TERMINATION FACTOR 2"/>
    <property type="match status" value="1"/>
</dbReference>
<dbReference type="Pfam" id="PF04641">
    <property type="entry name" value="Rtf2"/>
    <property type="match status" value="1"/>
</dbReference>
<protein>
    <recommendedName>
        <fullName evidence="3">Replication termination factor 2</fullName>
        <shortName>RTF2</shortName>
    </recommendedName>
    <alternativeName>
        <fullName>Replication termination factor 2 domain-containing protein 1</fullName>
    </alternativeName>
</protein>